<keyword id="KW-0687">Ribonucleoprotein</keyword>
<keyword id="KW-0689">Ribosomal protein</keyword>
<keyword id="KW-0694">RNA-binding</keyword>
<keyword id="KW-0699">rRNA-binding</keyword>
<gene>
    <name evidence="1" type="primary">rplO</name>
    <name type="ordered locus">str1915</name>
</gene>
<protein>
    <recommendedName>
        <fullName evidence="1">Large ribosomal subunit protein uL15</fullName>
    </recommendedName>
    <alternativeName>
        <fullName evidence="3">50S ribosomal protein L15</fullName>
    </alternativeName>
</protein>
<comment type="function">
    <text evidence="1">Binds to the 23S rRNA.</text>
</comment>
<comment type="subunit">
    <text evidence="1">Part of the 50S ribosomal subunit.</text>
</comment>
<comment type="similarity">
    <text evidence="1">Belongs to the universal ribosomal protein uL15 family.</text>
</comment>
<comment type="sequence caution" evidence="3">
    <conflict type="erroneous initiation">
        <sequence resource="EMBL-CDS" id="AAV63428"/>
    </conflict>
</comment>
<reference key="1">
    <citation type="journal article" date="2004" name="Nat. Biotechnol.">
        <title>Complete sequence and comparative genome analysis of the dairy bacterium Streptococcus thermophilus.</title>
        <authorList>
            <person name="Bolotin A."/>
            <person name="Quinquis B."/>
            <person name="Renault P."/>
            <person name="Sorokin A."/>
            <person name="Ehrlich S.D."/>
            <person name="Kulakauskas S."/>
            <person name="Lapidus A."/>
            <person name="Goltsman E."/>
            <person name="Mazur M."/>
            <person name="Pusch G.D."/>
            <person name="Fonstein M."/>
            <person name="Overbeek R."/>
            <person name="Kyprides N."/>
            <person name="Purnelle B."/>
            <person name="Prozzi D."/>
            <person name="Ngui K."/>
            <person name="Masuy D."/>
            <person name="Hancy F."/>
            <person name="Burteau S."/>
            <person name="Boutry M."/>
            <person name="Delcour J."/>
            <person name="Goffeau A."/>
            <person name="Hols P."/>
        </authorList>
    </citation>
    <scope>NUCLEOTIDE SEQUENCE [LARGE SCALE GENOMIC DNA]</scope>
    <source>
        <strain>CNRZ 1066</strain>
    </source>
</reference>
<dbReference type="EMBL" id="CP000024">
    <property type="protein sequence ID" value="AAV63428.1"/>
    <property type="status" value="ALT_INIT"/>
    <property type="molecule type" value="Genomic_DNA"/>
</dbReference>
<dbReference type="RefSeq" id="WP_002952138.1">
    <property type="nucleotide sequence ID" value="NC_006449.1"/>
</dbReference>
<dbReference type="SMR" id="Q5LXT0"/>
<dbReference type="GeneID" id="66899643"/>
<dbReference type="KEGG" id="stc:str1915"/>
<dbReference type="HOGENOM" id="CLU_055188_4_2_9"/>
<dbReference type="GO" id="GO:0022625">
    <property type="term" value="C:cytosolic large ribosomal subunit"/>
    <property type="evidence" value="ECO:0007669"/>
    <property type="project" value="TreeGrafter"/>
</dbReference>
<dbReference type="GO" id="GO:0019843">
    <property type="term" value="F:rRNA binding"/>
    <property type="evidence" value="ECO:0007669"/>
    <property type="project" value="UniProtKB-UniRule"/>
</dbReference>
<dbReference type="GO" id="GO:0003735">
    <property type="term" value="F:structural constituent of ribosome"/>
    <property type="evidence" value="ECO:0007669"/>
    <property type="project" value="InterPro"/>
</dbReference>
<dbReference type="GO" id="GO:0006412">
    <property type="term" value="P:translation"/>
    <property type="evidence" value="ECO:0007669"/>
    <property type="project" value="UniProtKB-UniRule"/>
</dbReference>
<dbReference type="Gene3D" id="3.100.10.10">
    <property type="match status" value="1"/>
</dbReference>
<dbReference type="HAMAP" id="MF_01341">
    <property type="entry name" value="Ribosomal_uL15"/>
    <property type="match status" value="1"/>
</dbReference>
<dbReference type="InterPro" id="IPR030878">
    <property type="entry name" value="Ribosomal_uL15"/>
</dbReference>
<dbReference type="InterPro" id="IPR021131">
    <property type="entry name" value="Ribosomal_uL15/eL18"/>
</dbReference>
<dbReference type="InterPro" id="IPR036227">
    <property type="entry name" value="Ribosomal_uL15/eL18_sf"/>
</dbReference>
<dbReference type="InterPro" id="IPR005749">
    <property type="entry name" value="Ribosomal_uL15_bac-type"/>
</dbReference>
<dbReference type="InterPro" id="IPR001196">
    <property type="entry name" value="Ribosomal_uL15_CS"/>
</dbReference>
<dbReference type="NCBIfam" id="TIGR01071">
    <property type="entry name" value="rplO_bact"/>
    <property type="match status" value="1"/>
</dbReference>
<dbReference type="PANTHER" id="PTHR12934">
    <property type="entry name" value="50S RIBOSOMAL PROTEIN L15"/>
    <property type="match status" value="1"/>
</dbReference>
<dbReference type="PANTHER" id="PTHR12934:SF11">
    <property type="entry name" value="LARGE RIBOSOMAL SUBUNIT PROTEIN UL15M"/>
    <property type="match status" value="1"/>
</dbReference>
<dbReference type="Pfam" id="PF00828">
    <property type="entry name" value="Ribosomal_L27A"/>
    <property type="match status" value="1"/>
</dbReference>
<dbReference type="SUPFAM" id="SSF52080">
    <property type="entry name" value="Ribosomal proteins L15p and L18e"/>
    <property type="match status" value="1"/>
</dbReference>
<dbReference type="PROSITE" id="PS00475">
    <property type="entry name" value="RIBOSOMAL_L15"/>
    <property type="match status" value="1"/>
</dbReference>
<evidence type="ECO:0000255" key="1">
    <source>
        <dbReference type="HAMAP-Rule" id="MF_01341"/>
    </source>
</evidence>
<evidence type="ECO:0000256" key="2">
    <source>
        <dbReference type="SAM" id="MobiDB-lite"/>
    </source>
</evidence>
<evidence type="ECO:0000305" key="3"/>
<accession>Q5LXT0</accession>
<proteinExistence type="inferred from homology"/>
<organism>
    <name type="scientific">Streptococcus thermophilus (strain CNRZ 1066)</name>
    <dbReference type="NCBI Taxonomy" id="299768"/>
    <lineage>
        <taxon>Bacteria</taxon>
        <taxon>Bacillati</taxon>
        <taxon>Bacillota</taxon>
        <taxon>Bacilli</taxon>
        <taxon>Lactobacillales</taxon>
        <taxon>Streptococcaceae</taxon>
        <taxon>Streptococcus</taxon>
    </lineage>
</organism>
<name>RL15_STRT1</name>
<feature type="chain" id="PRO_0000104830" description="Large ribosomal subunit protein uL15">
    <location>
        <begin position="1"/>
        <end position="146"/>
    </location>
</feature>
<feature type="region of interest" description="Disordered" evidence="2">
    <location>
        <begin position="1"/>
        <end position="57"/>
    </location>
</feature>
<feature type="compositionally biased region" description="Basic and acidic residues" evidence="2">
    <location>
        <begin position="1"/>
        <end position="13"/>
    </location>
</feature>
<feature type="compositionally biased region" description="Gly residues" evidence="2">
    <location>
        <begin position="23"/>
        <end position="35"/>
    </location>
</feature>
<sequence length="146" mass="15545">MKLHELKPAEGSRKVRNRVGRGTSSGNGKTSGRGQKGQKARSGVGLRPGFEGGQTPLFRRLPKRGFTNINAKEYTLVNLEQLNVFEDGTEVTPVVLKEAGIIRAEKSGVKVLGNGELTKKLTVKAAKFSKSAEAAITAKGGSIEVI</sequence>